<proteinExistence type="evidence at protein level"/>
<keyword id="KW-0002">3D-structure</keyword>
<keyword id="KW-0256">Endoplasmic reticulum</keyword>
<keyword id="KW-0931">ER-Golgi transport</keyword>
<keyword id="KW-0333">Golgi apparatus</keyword>
<keyword id="KW-0449">Lipoprotein</keyword>
<keyword id="KW-0564">Palmitate</keyword>
<keyword id="KW-1185">Reference proteome</keyword>
<keyword id="KW-0813">Transport</keyword>
<evidence type="ECO:0000250" key="1"/>
<evidence type="ECO:0000250" key="2">
    <source>
        <dbReference type="UniProtKB" id="O43617"/>
    </source>
</evidence>
<evidence type="ECO:0000269" key="3">
    <source>
    </source>
</evidence>
<evidence type="ECO:0000269" key="4">
    <source>
    </source>
</evidence>
<evidence type="ECO:0000305" key="5"/>
<evidence type="ECO:0000312" key="6">
    <source>
        <dbReference type="MGI" id="MGI:1351486"/>
    </source>
</evidence>
<evidence type="ECO:0007829" key="7">
    <source>
        <dbReference type="PDB" id="1WC9"/>
    </source>
</evidence>
<evidence type="ECO:0007829" key="8">
    <source>
        <dbReference type="PDB" id="2J3R"/>
    </source>
</evidence>
<evidence type="ECO:0007829" key="9">
    <source>
        <dbReference type="PDB" id="2J3W"/>
    </source>
</evidence>
<sequence length="180" mass="20302">MSRQANRGTESKKMSSELFTLTYGALVTQLCKDYENDEDVNKQLDRMGYNIGVRLIEDFLARSNVGRCHDFRETADVIAKVAFKMYLGITPSITNWSPAGDEFSLILENNPLVDFVELPDNHSALIYSNLLCGVLRGALEMVQMAVEAKFVQDTLKGDGVTEIRMRFIRRIEDNLPAGEE</sequence>
<reference key="1">
    <citation type="submission" date="1998-01" db="EMBL/GenBank/DDBJ databases">
        <authorList>
            <person name="Eva L."/>
            <person name="Subramaniam V.N."/>
            <person name="Hong W."/>
        </authorList>
    </citation>
    <scope>NUCLEOTIDE SEQUENCE [MRNA]</scope>
</reference>
<reference key="2">
    <citation type="journal article" date="2004" name="Genome Res.">
        <title>The status, quality, and expansion of the NIH full-length cDNA project: the Mammalian Gene Collection (MGC).</title>
        <authorList>
            <consortium name="The MGC Project Team"/>
        </authorList>
    </citation>
    <scope>NUCLEOTIDE SEQUENCE [LARGE SCALE MRNA]</scope>
</reference>
<reference key="3">
    <citation type="journal article" date="2010" name="Cell">
        <title>A tissue-specific atlas of mouse protein phosphorylation and expression.</title>
        <authorList>
            <person name="Huttlin E.L."/>
            <person name="Jedrychowski M.P."/>
            <person name="Elias J.E."/>
            <person name="Goswami T."/>
            <person name="Rad R."/>
            <person name="Beausoleil S.A."/>
            <person name="Villen J."/>
            <person name="Haas W."/>
            <person name="Sowa M.E."/>
            <person name="Gygi S.P."/>
        </authorList>
    </citation>
    <scope>IDENTIFICATION BY MASS SPECTROMETRY [LARGE SCALE ANALYSIS]</scope>
    <source>
        <tissue>Brain</tissue>
        <tissue>Brown adipose tissue</tissue>
        <tissue>Heart</tissue>
        <tissue>Kidney</tissue>
        <tissue>Liver</tissue>
        <tissue>Lung</tissue>
        <tissue>Spleen</tissue>
        <tissue>Testis</tissue>
    </source>
</reference>
<reference key="4">
    <citation type="journal article" date="2006" name="J. Mol. Biol.">
        <title>Structure of the Bet3-Tpc6B core of TRAPP: two Tpc6 paralogs form trimeric complexes with Bet3 and Mum2.</title>
        <authorList>
            <person name="Kummel D."/>
            <person name="Muller J.J."/>
            <person name="Roske Y."/>
            <person name="Henke N."/>
            <person name="Heinemann U."/>
        </authorList>
    </citation>
    <scope>TISSUE SPECIFICITY</scope>
</reference>
<reference key="5">
    <citation type="journal article" date="2005" name="Nat. Struct. Mol. Biol.">
        <title>Crystal structure of bet3 reveals a novel mechanism for Golgi localization of tethering factor TRAPP.</title>
        <authorList>
            <person name="Kim Y.-G."/>
            <person name="Sohn E.J."/>
            <person name="Seo J."/>
            <person name="Lee K.-J."/>
            <person name="Lee H.-S."/>
            <person name="Hwang I."/>
            <person name="Whiteway M."/>
            <person name="Sacher M."/>
            <person name="Oh B.-H."/>
        </authorList>
    </citation>
    <scope>X-RAY CRYSTALLOGRAPHY (1.9 ANGSTROMS)</scope>
    <scope>SUBUNIT</scope>
    <scope>PALMITOYLATION AT CYS-68</scope>
</reference>
<reference key="6">
    <citation type="submission" date="2004-11" db="PDB data bank">
        <title>Crystal structure of Bet3 homolog (13277653) from Mus musculus at 2.10 A resolution.</title>
        <authorList>
            <consortium name="Joint center for structural genomics (JCSG)"/>
        </authorList>
    </citation>
    <scope>X-RAY CRYSTALLOGRAPHY (2.10 ANGSTROMS)</scope>
    <scope>SUBUNIT</scope>
</reference>
<dbReference type="EMBL" id="AF041433">
    <property type="protein sequence ID" value="AAB96937.1"/>
    <property type="molecule type" value="mRNA"/>
</dbReference>
<dbReference type="EMBL" id="BC003736">
    <property type="protein sequence ID" value="AAH03736.1"/>
    <property type="molecule type" value="mRNA"/>
</dbReference>
<dbReference type="CCDS" id="CCDS18647.1"/>
<dbReference type="RefSeq" id="NP_038746.1">
    <property type="nucleotide sequence ID" value="NM_013718.2"/>
</dbReference>
<dbReference type="PDB" id="1WC8">
    <property type="method" value="X-ray"/>
    <property type="resolution" value="1.90 A"/>
    <property type="chains" value="A=1-180"/>
</dbReference>
<dbReference type="PDB" id="1WC9">
    <property type="method" value="X-ray"/>
    <property type="resolution" value="1.60 A"/>
    <property type="chains" value="A=8-172"/>
</dbReference>
<dbReference type="PDB" id="2J3R">
    <property type="method" value="X-ray"/>
    <property type="resolution" value="2.60 A"/>
    <property type="chains" value="A=1-180"/>
</dbReference>
<dbReference type="PDB" id="2J3T">
    <property type="method" value="X-ray"/>
    <property type="resolution" value="2.40 A"/>
    <property type="chains" value="A=1-180"/>
</dbReference>
<dbReference type="PDB" id="2J3W">
    <property type="method" value="X-ray"/>
    <property type="resolution" value="2.10 A"/>
    <property type="chains" value="D/E=1-180"/>
</dbReference>
<dbReference type="PDB" id="2PWN">
    <property type="method" value="X-ray"/>
    <property type="resolution" value="2.04 A"/>
    <property type="chains" value="A=1-180"/>
</dbReference>
<dbReference type="PDBsum" id="1WC8"/>
<dbReference type="PDBsum" id="1WC9"/>
<dbReference type="PDBsum" id="2J3R"/>
<dbReference type="PDBsum" id="2J3T"/>
<dbReference type="PDBsum" id="2J3W"/>
<dbReference type="PDBsum" id="2PWN"/>
<dbReference type="SMR" id="O55013"/>
<dbReference type="BioGRID" id="205122">
    <property type="interactions" value="11"/>
</dbReference>
<dbReference type="ComplexPortal" id="CPX-4764">
    <property type="entry name" value="TRAPP II complex"/>
</dbReference>
<dbReference type="ComplexPortal" id="CPX-4766">
    <property type="entry name" value="TRAPP III complex"/>
</dbReference>
<dbReference type="FunCoup" id="O55013">
    <property type="interactions" value="3575"/>
</dbReference>
<dbReference type="IntAct" id="O55013">
    <property type="interactions" value="6"/>
</dbReference>
<dbReference type="MINT" id="O55013"/>
<dbReference type="STRING" id="10090.ENSMUSP00000030660"/>
<dbReference type="iPTMnet" id="O55013"/>
<dbReference type="PhosphoSitePlus" id="O55013"/>
<dbReference type="SwissPalm" id="O55013"/>
<dbReference type="REPRODUCTION-2DPAGE" id="O55013"/>
<dbReference type="PaxDb" id="10090-ENSMUSP00000030660"/>
<dbReference type="PeptideAtlas" id="O55013"/>
<dbReference type="ProteomicsDB" id="260731"/>
<dbReference type="Pumba" id="O55013"/>
<dbReference type="TopDownProteomics" id="O55013"/>
<dbReference type="Antibodypedia" id="31641">
    <property type="antibodies" value="221 antibodies from 28 providers"/>
</dbReference>
<dbReference type="DNASU" id="27096"/>
<dbReference type="Ensembl" id="ENSMUST00000030660.9">
    <property type="protein sequence ID" value="ENSMUSP00000030660.9"/>
    <property type="gene ID" value="ENSMUSG00000028847.9"/>
</dbReference>
<dbReference type="GeneID" id="27096"/>
<dbReference type="KEGG" id="mmu:27096"/>
<dbReference type="UCSC" id="uc008utc.1">
    <property type="organism name" value="mouse"/>
</dbReference>
<dbReference type="AGR" id="MGI:1351486"/>
<dbReference type="CTD" id="27095"/>
<dbReference type="MGI" id="MGI:1351486">
    <property type="gene designation" value="Trappc3"/>
</dbReference>
<dbReference type="VEuPathDB" id="HostDB:ENSMUSG00000028847"/>
<dbReference type="eggNOG" id="KOG3330">
    <property type="taxonomic scope" value="Eukaryota"/>
</dbReference>
<dbReference type="GeneTree" id="ENSGT00390000003880"/>
<dbReference type="HOGENOM" id="CLU_087110_0_0_1"/>
<dbReference type="InParanoid" id="O55013"/>
<dbReference type="OMA" id="MVQMQVQ"/>
<dbReference type="OrthoDB" id="10262857at2759"/>
<dbReference type="PhylomeDB" id="O55013"/>
<dbReference type="TreeFam" id="TF300091"/>
<dbReference type="Reactome" id="R-MMU-204005">
    <property type="pathway name" value="COPII-mediated vesicle transport"/>
</dbReference>
<dbReference type="Reactome" id="R-MMU-8876198">
    <property type="pathway name" value="RAB GEFs exchange GTP for GDP on RABs"/>
</dbReference>
<dbReference type="BioGRID-ORCS" id="27096">
    <property type="hits" value="25 hits in 79 CRISPR screens"/>
</dbReference>
<dbReference type="CD-CODE" id="CE726F99">
    <property type="entry name" value="Postsynaptic density"/>
</dbReference>
<dbReference type="ChiTaRS" id="Trappc3">
    <property type="organism name" value="mouse"/>
</dbReference>
<dbReference type="EvolutionaryTrace" id="O55013"/>
<dbReference type="PRO" id="PR:O55013"/>
<dbReference type="Proteomes" id="UP000000589">
    <property type="component" value="Chromosome 4"/>
</dbReference>
<dbReference type="RNAct" id="O55013">
    <property type="molecule type" value="protein"/>
</dbReference>
<dbReference type="Bgee" id="ENSMUSG00000028847">
    <property type="expression patterns" value="Expressed in vault of skull and 268 other cell types or tissues"/>
</dbReference>
<dbReference type="ExpressionAtlas" id="O55013">
    <property type="expression patterns" value="baseline and differential"/>
</dbReference>
<dbReference type="GO" id="GO:0005737">
    <property type="term" value="C:cytoplasm"/>
    <property type="evidence" value="ECO:0000303"/>
    <property type="project" value="ComplexPortal"/>
</dbReference>
<dbReference type="GO" id="GO:0005829">
    <property type="term" value="C:cytosol"/>
    <property type="evidence" value="ECO:0000314"/>
    <property type="project" value="MGI"/>
</dbReference>
<dbReference type="GO" id="GO:0005783">
    <property type="term" value="C:endoplasmic reticulum"/>
    <property type="evidence" value="ECO:0007669"/>
    <property type="project" value="UniProtKB-SubCell"/>
</dbReference>
<dbReference type="GO" id="GO:0000139">
    <property type="term" value="C:Golgi membrane"/>
    <property type="evidence" value="ECO:0000314"/>
    <property type="project" value="MGI"/>
</dbReference>
<dbReference type="GO" id="GO:0030008">
    <property type="term" value="C:TRAPP complex"/>
    <property type="evidence" value="ECO:0000314"/>
    <property type="project" value="MGI"/>
</dbReference>
<dbReference type="GO" id="GO:1990071">
    <property type="term" value="C:TRAPPII protein complex"/>
    <property type="evidence" value="ECO:0000303"/>
    <property type="project" value="ComplexPortal"/>
</dbReference>
<dbReference type="GO" id="GO:1990072">
    <property type="term" value="C:TRAPPIII protein complex"/>
    <property type="evidence" value="ECO:0000303"/>
    <property type="project" value="ComplexPortal"/>
</dbReference>
<dbReference type="GO" id="GO:0048208">
    <property type="term" value="P:COPII vesicle coating"/>
    <property type="evidence" value="ECO:0000303"/>
    <property type="project" value="ComplexPortal"/>
</dbReference>
<dbReference type="GO" id="GO:0006888">
    <property type="term" value="P:endoplasmic reticulum to Golgi vesicle-mediated transport"/>
    <property type="evidence" value="ECO:0000314"/>
    <property type="project" value="MGI"/>
</dbReference>
<dbReference type="GO" id="GO:0006901">
    <property type="term" value="P:vesicle coating"/>
    <property type="evidence" value="ECO:0000303"/>
    <property type="project" value="ComplexPortal"/>
</dbReference>
<dbReference type="GO" id="GO:0099022">
    <property type="term" value="P:vesicle tethering"/>
    <property type="evidence" value="ECO:0000303"/>
    <property type="project" value="ComplexPortal"/>
</dbReference>
<dbReference type="CDD" id="cd14942">
    <property type="entry name" value="TRAPPC3_bet3"/>
    <property type="match status" value="1"/>
</dbReference>
<dbReference type="FunFam" id="3.30.1380.20:FF:000003">
    <property type="entry name" value="Trafficking protein particle complex subunit"/>
    <property type="match status" value="1"/>
</dbReference>
<dbReference type="Gene3D" id="3.30.1380.20">
    <property type="entry name" value="Trafficking protein particle complex subunit 3"/>
    <property type="match status" value="1"/>
</dbReference>
<dbReference type="InterPro" id="IPR016721">
    <property type="entry name" value="Bet3"/>
</dbReference>
<dbReference type="InterPro" id="IPR024096">
    <property type="entry name" value="NO_sig/Golgi_transp_ligand-bd"/>
</dbReference>
<dbReference type="InterPro" id="IPR007194">
    <property type="entry name" value="TRAPP_component"/>
</dbReference>
<dbReference type="PANTHER" id="PTHR13048">
    <property type="entry name" value="TRAFFICKING PROTEIN PARTICLE COMPLEX SUBUNIT 3"/>
    <property type="match status" value="1"/>
</dbReference>
<dbReference type="Pfam" id="PF04051">
    <property type="entry name" value="TRAPP"/>
    <property type="match status" value="1"/>
</dbReference>
<dbReference type="PIRSF" id="PIRSF018293">
    <property type="entry name" value="TRAPP_I_complex_Bet3"/>
    <property type="match status" value="1"/>
</dbReference>
<dbReference type="SUPFAM" id="SSF111126">
    <property type="entry name" value="Ligand-binding domain in the NO signalling and Golgi transport"/>
    <property type="match status" value="1"/>
</dbReference>
<comment type="function">
    <text>May play a role in vesicular transport from endoplasmic reticulum to Golgi.</text>
</comment>
<comment type="subunit">
    <text evidence="2">Homodimer. Component of the multisubunit transport protein particle (TRAPP) complex, which includes at least TRAPPC2, TRAPPC2L, TRAPPC3, TRAPPC3L, TRAPPC4, TRAPPC5, TRAPPC8, TRAPPC9, TRAPPC10, TRAPPC11 and TRAPPC12. Heterodimer with TRAPPC6A. The heterodimer TRAPPC3-TRAPPC6A interacts with TRAPPC2L. Heterodimer with TRAPPC6b. The heterodimer TRAPPC6B-TRAPPC3 interacts with TRAPPC1 likely providing a core for TRAPP complex formation.</text>
</comment>
<comment type="subcellular location">
    <subcellularLocation>
        <location evidence="1">Golgi apparatus</location>
        <location evidence="1">cis-Golgi network</location>
    </subcellularLocation>
    <subcellularLocation>
        <location evidence="1">Endoplasmic reticulum</location>
    </subcellularLocation>
</comment>
<comment type="tissue specificity">
    <text evidence="4">Widely expressed. Expressed in lung, heart, liver, spleen, brain and kidney.</text>
</comment>
<comment type="similarity">
    <text evidence="5">Belongs to the TRAPP small subunits family. BET3 subfamily.</text>
</comment>
<gene>
    <name evidence="6" type="primary">Trappc3</name>
    <name evidence="2" type="synonym">Bet3</name>
</gene>
<name>TPPC3_MOUSE</name>
<protein>
    <recommendedName>
        <fullName>Trafficking protein particle complex subunit 3</fullName>
    </recommendedName>
    <alternativeName>
        <fullName>BET3 homolog</fullName>
    </alternativeName>
</protein>
<accession>O55013</accession>
<organism>
    <name type="scientific">Mus musculus</name>
    <name type="common">Mouse</name>
    <dbReference type="NCBI Taxonomy" id="10090"/>
    <lineage>
        <taxon>Eukaryota</taxon>
        <taxon>Metazoa</taxon>
        <taxon>Chordata</taxon>
        <taxon>Craniata</taxon>
        <taxon>Vertebrata</taxon>
        <taxon>Euteleostomi</taxon>
        <taxon>Mammalia</taxon>
        <taxon>Eutheria</taxon>
        <taxon>Euarchontoglires</taxon>
        <taxon>Glires</taxon>
        <taxon>Rodentia</taxon>
        <taxon>Myomorpha</taxon>
        <taxon>Muroidea</taxon>
        <taxon>Muridae</taxon>
        <taxon>Murinae</taxon>
        <taxon>Mus</taxon>
        <taxon>Mus</taxon>
    </lineage>
</organism>
<feature type="chain" id="PRO_0000211573" description="Trafficking protein particle complex subunit 3">
    <location>
        <begin position="1"/>
        <end position="180"/>
    </location>
</feature>
<feature type="lipid moiety-binding region" description="S-palmitoyl cysteine" evidence="3">
    <location>
        <position position="68"/>
    </location>
</feature>
<feature type="strand" evidence="8">
    <location>
        <begin position="13"/>
        <end position="15"/>
    </location>
</feature>
<feature type="helix" evidence="7">
    <location>
        <begin position="17"/>
        <end position="34"/>
    </location>
</feature>
<feature type="helix" evidence="7">
    <location>
        <begin position="37"/>
        <end position="61"/>
    </location>
</feature>
<feature type="helix" evidence="7">
    <location>
        <begin position="71"/>
        <end position="80"/>
    </location>
</feature>
<feature type="helix" evidence="7">
    <location>
        <begin position="82"/>
        <end position="87"/>
    </location>
</feature>
<feature type="strand" evidence="7">
    <location>
        <begin position="92"/>
        <end position="94"/>
    </location>
</feature>
<feature type="turn" evidence="8">
    <location>
        <begin position="98"/>
        <end position="100"/>
    </location>
</feature>
<feature type="strand" evidence="7">
    <location>
        <begin position="102"/>
        <end position="108"/>
    </location>
</feature>
<feature type="helix" evidence="7">
    <location>
        <begin position="111"/>
        <end position="113"/>
    </location>
</feature>
<feature type="helix" evidence="9">
    <location>
        <begin position="120"/>
        <end position="122"/>
    </location>
</feature>
<feature type="turn" evidence="7">
    <location>
        <begin position="127"/>
        <end position="129"/>
    </location>
</feature>
<feature type="helix" evidence="7">
    <location>
        <begin position="130"/>
        <end position="140"/>
    </location>
</feature>
<feature type="turn" evidence="7">
    <location>
        <begin position="141"/>
        <end position="143"/>
    </location>
</feature>
<feature type="strand" evidence="7">
    <location>
        <begin position="144"/>
        <end position="152"/>
    </location>
</feature>
<feature type="helix" evidence="7">
    <location>
        <begin position="154"/>
        <end position="156"/>
    </location>
</feature>
<feature type="strand" evidence="7">
    <location>
        <begin position="159"/>
        <end position="170"/>
    </location>
</feature>